<proteinExistence type="inferred from homology"/>
<dbReference type="EMBL" id="CP000555">
    <property type="protein sequence ID" value="ABM94578.1"/>
    <property type="molecule type" value="Genomic_DNA"/>
</dbReference>
<dbReference type="RefSeq" id="WP_011829215.1">
    <property type="nucleotide sequence ID" value="NC_008825.1"/>
</dbReference>
<dbReference type="SMR" id="A2SG89"/>
<dbReference type="STRING" id="420662.Mpe_A1616"/>
<dbReference type="KEGG" id="mpt:Mpe_A1616"/>
<dbReference type="eggNOG" id="COG0691">
    <property type="taxonomic scope" value="Bacteria"/>
</dbReference>
<dbReference type="HOGENOM" id="CLU_108953_3_0_4"/>
<dbReference type="Proteomes" id="UP000000366">
    <property type="component" value="Chromosome"/>
</dbReference>
<dbReference type="GO" id="GO:0005829">
    <property type="term" value="C:cytosol"/>
    <property type="evidence" value="ECO:0007669"/>
    <property type="project" value="TreeGrafter"/>
</dbReference>
<dbReference type="GO" id="GO:0003723">
    <property type="term" value="F:RNA binding"/>
    <property type="evidence" value="ECO:0007669"/>
    <property type="project" value="UniProtKB-UniRule"/>
</dbReference>
<dbReference type="GO" id="GO:0070929">
    <property type="term" value="P:trans-translation"/>
    <property type="evidence" value="ECO:0007669"/>
    <property type="project" value="UniProtKB-UniRule"/>
</dbReference>
<dbReference type="CDD" id="cd09294">
    <property type="entry name" value="SmpB"/>
    <property type="match status" value="1"/>
</dbReference>
<dbReference type="Gene3D" id="2.40.280.10">
    <property type="match status" value="1"/>
</dbReference>
<dbReference type="HAMAP" id="MF_00023">
    <property type="entry name" value="SmpB"/>
    <property type="match status" value="1"/>
</dbReference>
<dbReference type="InterPro" id="IPR023620">
    <property type="entry name" value="SmpB"/>
</dbReference>
<dbReference type="InterPro" id="IPR000037">
    <property type="entry name" value="SsrA-bd_prot"/>
</dbReference>
<dbReference type="InterPro" id="IPR020081">
    <property type="entry name" value="SsrA-bd_prot_CS"/>
</dbReference>
<dbReference type="NCBIfam" id="NF003843">
    <property type="entry name" value="PRK05422.1"/>
    <property type="match status" value="1"/>
</dbReference>
<dbReference type="NCBIfam" id="TIGR00086">
    <property type="entry name" value="smpB"/>
    <property type="match status" value="1"/>
</dbReference>
<dbReference type="PANTHER" id="PTHR30308:SF2">
    <property type="entry name" value="SSRA-BINDING PROTEIN"/>
    <property type="match status" value="1"/>
</dbReference>
<dbReference type="PANTHER" id="PTHR30308">
    <property type="entry name" value="TMRNA-BINDING COMPONENT OF TRANS-TRANSLATION TAGGING COMPLEX"/>
    <property type="match status" value="1"/>
</dbReference>
<dbReference type="Pfam" id="PF01668">
    <property type="entry name" value="SmpB"/>
    <property type="match status" value="1"/>
</dbReference>
<dbReference type="SUPFAM" id="SSF74982">
    <property type="entry name" value="Small protein B (SmpB)"/>
    <property type="match status" value="1"/>
</dbReference>
<dbReference type="PROSITE" id="PS01317">
    <property type="entry name" value="SSRP"/>
    <property type="match status" value="1"/>
</dbReference>
<comment type="function">
    <text evidence="1">Required for rescue of stalled ribosomes mediated by trans-translation. Binds to transfer-messenger RNA (tmRNA), required for stable association of tmRNA with ribosomes. tmRNA and SmpB together mimic tRNA shape, replacing the anticodon stem-loop with SmpB. tmRNA is encoded by the ssrA gene; the 2 termini fold to resemble tRNA(Ala) and it encodes a 'tag peptide', a short internal open reading frame. During trans-translation Ala-aminoacylated tmRNA acts like a tRNA, entering the A-site of stalled ribosomes, displacing the stalled mRNA. The ribosome then switches to translate the ORF on the tmRNA; the nascent peptide is terminated with the 'tag peptide' encoded by the tmRNA and targeted for degradation. The ribosome is freed to recommence translation, which seems to be the essential function of trans-translation.</text>
</comment>
<comment type="subcellular location">
    <subcellularLocation>
        <location evidence="1">Cytoplasm</location>
    </subcellularLocation>
    <text evidence="1">The tmRNA-SmpB complex associates with stalled 70S ribosomes.</text>
</comment>
<comment type="similarity">
    <text evidence="1">Belongs to the SmpB family.</text>
</comment>
<evidence type="ECO:0000255" key="1">
    <source>
        <dbReference type="HAMAP-Rule" id="MF_00023"/>
    </source>
</evidence>
<evidence type="ECO:0000256" key="2">
    <source>
        <dbReference type="SAM" id="MobiDB-lite"/>
    </source>
</evidence>
<name>SSRP_METPP</name>
<sequence>MAIADNKKARFNYTIEEQFEAGMVLEGWEVKAIRAGQVQLTDGYVVVKDGELFLIGCRINPLRTASTHVHPQADRTKKLLMKKDEIRRLVGKVEQKGYTLVPLNLHYKGGRVKADIALAKGKDLHDKRETEKKRDWEREKGQLMRHKISSPRKDT</sequence>
<gene>
    <name evidence="1" type="primary">smpB</name>
    <name type="ordered locus">Mpe_A1616</name>
</gene>
<organism>
    <name type="scientific">Methylibium petroleiphilum (strain ATCC BAA-1232 / LMG 22953 / PM1)</name>
    <dbReference type="NCBI Taxonomy" id="420662"/>
    <lineage>
        <taxon>Bacteria</taxon>
        <taxon>Pseudomonadati</taxon>
        <taxon>Pseudomonadota</taxon>
        <taxon>Betaproteobacteria</taxon>
        <taxon>Burkholderiales</taxon>
        <taxon>Sphaerotilaceae</taxon>
        <taxon>Methylibium</taxon>
    </lineage>
</organism>
<keyword id="KW-0963">Cytoplasm</keyword>
<keyword id="KW-1185">Reference proteome</keyword>
<keyword id="KW-0694">RNA-binding</keyword>
<feature type="chain" id="PRO_1000002083" description="SsrA-binding protein">
    <location>
        <begin position="1"/>
        <end position="155"/>
    </location>
</feature>
<feature type="region of interest" description="Disordered" evidence="2">
    <location>
        <begin position="123"/>
        <end position="155"/>
    </location>
</feature>
<feature type="compositionally biased region" description="Basic and acidic residues" evidence="2">
    <location>
        <begin position="123"/>
        <end position="142"/>
    </location>
</feature>
<feature type="compositionally biased region" description="Basic residues" evidence="2">
    <location>
        <begin position="143"/>
        <end position="155"/>
    </location>
</feature>
<protein>
    <recommendedName>
        <fullName evidence="1">SsrA-binding protein</fullName>
    </recommendedName>
    <alternativeName>
        <fullName evidence="1">Small protein B</fullName>
    </alternativeName>
</protein>
<reference key="1">
    <citation type="journal article" date="2007" name="J. Bacteriol.">
        <title>Whole-genome analysis of the methyl tert-butyl ether-degrading beta-proteobacterium Methylibium petroleiphilum PM1.</title>
        <authorList>
            <person name="Kane S.R."/>
            <person name="Chakicherla A.Y."/>
            <person name="Chain P.S.G."/>
            <person name="Schmidt R."/>
            <person name="Shin M.W."/>
            <person name="Legler T.C."/>
            <person name="Scow K.M."/>
            <person name="Larimer F.W."/>
            <person name="Lucas S.M."/>
            <person name="Richardson P.M."/>
            <person name="Hristova K.R."/>
        </authorList>
    </citation>
    <scope>NUCLEOTIDE SEQUENCE [LARGE SCALE GENOMIC DNA]</scope>
    <source>
        <strain>ATCC BAA-1232 / LMG 22953 / PM1</strain>
    </source>
</reference>
<accession>A2SG89</accession>